<feature type="chain" id="PRO_1000086365" description="DNA-directed RNA polymerase subunit beta">
    <location>
        <begin position="1"/>
        <end position="1162"/>
    </location>
</feature>
<evidence type="ECO:0000255" key="1">
    <source>
        <dbReference type="HAMAP-Rule" id="MF_01321"/>
    </source>
</evidence>
<protein>
    <recommendedName>
        <fullName evidence="1">DNA-directed RNA polymerase subunit beta</fullName>
        <shortName evidence="1">RNAP subunit beta</shortName>
        <ecNumber evidence="1">2.7.7.6</ecNumber>
    </recommendedName>
    <alternativeName>
        <fullName evidence="1">RNA polymerase subunit beta</fullName>
    </alternativeName>
    <alternativeName>
        <fullName evidence="1">Transcriptase subunit beta</fullName>
    </alternativeName>
</protein>
<keyword id="KW-0240">DNA-directed RNA polymerase</keyword>
<keyword id="KW-0548">Nucleotidyltransferase</keyword>
<keyword id="KW-0804">Transcription</keyword>
<keyword id="KW-0808">Transferase</keyword>
<name>RPOB_CLASE</name>
<accession>B0RB25</accession>
<reference key="1">
    <citation type="journal article" date="2008" name="J. Bacteriol.">
        <title>Genome of the actinomycete plant pathogen Clavibacter michiganensis subsp. sepedonicus suggests recent niche adaptation.</title>
        <authorList>
            <person name="Bentley S.D."/>
            <person name="Corton C."/>
            <person name="Brown S.E."/>
            <person name="Barron A."/>
            <person name="Clark L."/>
            <person name="Doggett J."/>
            <person name="Harris B."/>
            <person name="Ormond D."/>
            <person name="Quail M.A."/>
            <person name="May G."/>
            <person name="Francis D."/>
            <person name="Knudson D."/>
            <person name="Parkhill J."/>
            <person name="Ishimaru C.A."/>
        </authorList>
    </citation>
    <scope>NUCLEOTIDE SEQUENCE [LARGE SCALE GENOMIC DNA]</scope>
    <source>
        <strain>ATCC 33113 / DSM 20744 / JCM 9667 / LMG 2889 / ICMP 2535 / C-1</strain>
    </source>
</reference>
<proteinExistence type="inferred from homology"/>
<sequence length="1162" mass="128600">MAAARNATPTPQNGRDASRLSFAKITDTLTVPDLLALQTESFDWLVGSDAWKRRVEEGTKQGRTDLALNSGLEEIFEEISPIEDLGETMQLGFTNPYLEEQKYSIDECKERGKTYSAPLYVEAEFMNHLTGEIKTQTVFMGDFPLMTEKGTFIINGTERVVVSQLVRSPGVYFERQQEKTSDKDIYSARVIPSRGAWLEFEIDKRDQVGVRIDRKRKQSVTVFLKALGLTSEQILEEFKGVASIELTLEKDSILTKEEALKDIYRKLRPGEQVAAEAARALLDNFYFNPKRYDLAKVGRYKINRKLGIDKQLTDSVLTVEDILATIKYLVSLHANETKMNGTRDGKPVELRLDVDDIDHFGNRRIRAVGELIQNQVRTGLSRMERVVRERMTTQDIEAITPQTLINVRPVVAAIKEFFGTSQLSQFMDQNNPLAGLTHKRRLSALGPGGLSRERAGVEVRDVHPSHYGRMCPIETPEGPNIGLIGSLASFARINSFGFIETPYRRVVDGVVTDQIDYLTASEEDEFLVAQANAPLTKDFRFAEDRVLVRPKGGEVELVAKENVHYMDVSPRQMVSVATSLIPFLEHDDANRALMGANMQRQAVPLLRSESPLVGTGMEGYAAIDAGDVLTADASGVVAEVSAEVVTIQLDEGGTQTYYLRKFDRSNQGTSYNHRVLVSAGDRIEAGEVIADGPATENGELALGKNLLVAFMPWEGHNFEDAIILSQNLVKDDTLSSIHIEEYEVDARDTKLGKEEITRDLPNVSPELLADLDERGIIRIGAEVRPGDILVGKVTPKGETELSAEERLLRAIFNEKSREVRDTSLKVPHGEQGTIIGVKVFDSQDGDDELGSGVNQRVVVFIAQKRKITEGDKLAGRHGNKGVISKILPVEDMPFLADGTPVDVILNPLGIPGRMNFGQVLETHLGWSAKQGWEVEGKPKWAERLPDHARQAPAGTKVATPVFDGALEEEIAGLLDSTTVTRDGDRLIGSSGKTRLFDGRSGEPFPEPVSVGYMYILKLHHLVDDKIHARSTGPYSMITQQPLGGKAQFGGQRFGEMEVWALEAYGAAYALQELLTIKSDDILGRVKVYEAIVKGENIQEPGIPESFKVLIKEMQSLCLNVEVLSADGQAVSLRDTDDEVFRAAEELGINISTRFESSSIDDI</sequence>
<organism>
    <name type="scientific">Clavibacter sepedonicus</name>
    <name type="common">Clavibacter michiganensis subsp. sepedonicus</name>
    <dbReference type="NCBI Taxonomy" id="31964"/>
    <lineage>
        <taxon>Bacteria</taxon>
        <taxon>Bacillati</taxon>
        <taxon>Actinomycetota</taxon>
        <taxon>Actinomycetes</taxon>
        <taxon>Micrococcales</taxon>
        <taxon>Microbacteriaceae</taxon>
        <taxon>Clavibacter</taxon>
    </lineage>
</organism>
<comment type="function">
    <text evidence="1">DNA-dependent RNA polymerase catalyzes the transcription of DNA into RNA using the four ribonucleoside triphosphates as substrates.</text>
</comment>
<comment type="catalytic activity">
    <reaction evidence="1">
        <text>RNA(n) + a ribonucleoside 5'-triphosphate = RNA(n+1) + diphosphate</text>
        <dbReference type="Rhea" id="RHEA:21248"/>
        <dbReference type="Rhea" id="RHEA-COMP:14527"/>
        <dbReference type="Rhea" id="RHEA-COMP:17342"/>
        <dbReference type="ChEBI" id="CHEBI:33019"/>
        <dbReference type="ChEBI" id="CHEBI:61557"/>
        <dbReference type="ChEBI" id="CHEBI:140395"/>
        <dbReference type="EC" id="2.7.7.6"/>
    </reaction>
</comment>
<comment type="subunit">
    <text evidence="1">The RNAP catalytic core consists of 2 alpha, 1 beta, 1 beta' and 1 omega subunit. When a sigma factor is associated with the core the holoenzyme is formed, which can initiate transcription.</text>
</comment>
<comment type="similarity">
    <text evidence="1">Belongs to the RNA polymerase beta chain family.</text>
</comment>
<gene>
    <name evidence="1" type="primary">rpoB</name>
    <name type="ordered locus">CMS0269</name>
</gene>
<dbReference type="EC" id="2.7.7.6" evidence="1"/>
<dbReference type="EMBL" id="AM849034">
    <property type="protein sequence ID" value="CAQ00390.1"/>
    <property type="molecule type" value="Genomic_DNA"/>
</dbReference>
<dbReference type="RefSeq" id="WP_012297742.1">
    <property type="nucleotide sequence ID" value="NZ_MZMM01000001.1"/>
</dbReference>
<dbReference type="SMR" id="B0RB25"/>
<dbReference type="STRING" id="31964.CMS0269"/>
<dbReference type="KEGG" id="cms:CMS0269"/>
<dbReference type="eggNOG" id="COG0085">
    <property type="taxonomic scope" value="Bacteria"/>
</dbReference>
<dbReference type="HOGENOM" id="CLU_000524_4_3_11"/>
<dbReference type="Proteomes" id="UP000001318">
    <property type="component" value="Chromosome"/>
</dbReference>
<dbReference type="GO" id="GO:0000428">
    <property type="term" value="C:DNA-directed RNA polymerase complex"/>
    <property type="evidence" value="ECO:0007669"/>
    <property type="project" value="UniProtKB-KW"/>
</dbReference>
<dbReference type="GO" id="GO:0003677">
    <property type="term" value="F:DNA binding"/>
    <property type="evidence" value="ECO:0007669"/>
    <property type="project" value="UniProtKB-UniRule"/>
</dbReference>
<dbReference type="GO" id="GO:0003899">
    <property type="term" value="F:DNA-directed RNA polymerase activity"/>
    <property type="evidence" value="ECO:0007669"/>
    <property type="project" value="UniProtKB-UniRule"/>
</dbReference>
<dbReference type="GO" id="GO:0032549">
    <property type="term" value="F:ribonucleoside binding"/>
    <property type="evidence" value="ECO:0007669"/>
    <property type="project" value="InterPro"/>
</dbReference>
<dbReference type="GO" id="GO:0006351">
    <property type="term" value="P:DNA-templated transcription"/>
    <property type="evidence" value="ECO:0007669"/>
    <property type="project" value="UniProtKB-UniRule"/>
</dbReference>
<dbReference type="CDD" id="cd00653">
    <property type="entry name" value="RNA_pol_B_RPB2"/>
    <property type="match status" value="1"/>
</dbReference>
<dbReference type="FunFam" id="3.90.1800.10:FF:000001">
    <property type="entry name" value="DNA-directed RNA polymerase subunit beta"/>
    <property type="match status" value="1"/>
</dbReference>
<dbReference type="Gene3D" id="2.40.50.100">
    <property type="match status" value="1"/>
</dbReference>
<dbReference type="Gene3D" id="2.40.50.150">
    <property type="match status" value="1"/>
</dbReference>
<dbReference type="Gene3D" id="3.90.1100.10">
    <property type="match status" value="1"/>
</dbReference>
<dbReference type="Gene3D" id="2.30.150.10">
    <property type="entry name" value="DNA-directed RNA polymerase, beta subunit, external 1 domain"/>
    <property type="match status" value="1"/>
</dbReference>
<dbReference type="Gene3D" id="2.40.270.10">
    <property type="entry name" value="DNA-directed RNA polymerase, subunit 2, domain 6"/>
    <property type="match status" value="1"/>
</dbReference>
<dbReference type="Gene3D" id="3.90.1800.10">
    <property type="entry name" value="RNA polymerase alpha subunit dimerisation domain"/>
    <property type="match status" value="1"/>
</dbReference>
<dbReference type="Gene3D" id="3.90.1110.10">
    <property type="entry name" value="RNA polymerase Rpb2, domain 2"/>
    <property type="match status" value="1"/>
</dbReference>
<dbReference type="HAMAP" id="MF_01321">
    <property type="entry name" value="RNApol_bact_RpoB"/>
    <property type="match status" value="1"/>
</dbReference>
<dbReference type="InterPro" id="IPR042107">
    <property type="entry name" value="DNA-dir_RNA_pol_bsu_ext_1_sf"/>
</dbReference>
<dbReference type="InterPro" id="IPR019462">
    <property type="entry name" value="DNA-dir_RNA_pol_bsu_external_1"/>
</dbReference>
<dbReference type="InterPro" id="IPR015712">
    <property type="entry name" value="DNA-dir_RNA_pol_su2"/>
</dbReference>
<dbReference type="InterPro" id="IPR007120">
    <property type="entry name" value="DNA-dir_RNAP_su2_dom"/>
</dbReference>
<dbReference type="InterPro" id="IPR037033">
    <property type="entry name" value="DNA-dir_RNAP_su2_hyb_sf"/>
</dbReference>
<dbReference type="InterPro" id="IPR010243">
    <property type="entry name" value="RNA_pol_bsu_bac"/>
</dbReference>
<dbReference type="InterPro" id="IPR007121">
    <property type="entry name" value="RNA_pol_bsu_CS"/>
</dbReference>
<dbReference type="InterPro" id="IPR007644">
    <property type="entry name" value="RNA_pol_bsu_protrusion"/>
</dbReference>
<dbReference type="InterPro" id="IPR007642">
    <property type="entry name" value="RNA_pol_Rpb2_2"/>
</dbReference>
<dbReference type="InterPro" id="IPR037034">
    <property type="entry name" value="RNA_pol_Rpb2_2_sf"/>
</dbReference>
<dbReference type="InterPro" id="IPR007645">
    <property type="entry name" value="RNA_pol_Rpb2_3"/>
</dbReference>
<dbReference type="InterPro" id="IPR007641">
    <property type="entry name" value="RNA_pol_Rpb2_7"/>
</dbReference>
<dbReference type="InterPro" id="IPR014724">
    <property type="entry name" value="RNA_pol_RPB2_OB-fold"/>
</dbReference>
<dbReference type="NCBIfam" id="NF001616">
    <property type="entry name" value="PRK00405.1"/>
    <property type="match status" value="1"/>
</dbReference>
<dbReference type="NCBIfam" id="TIGR02013">
    <property type="entry name" value="rpoB"/>
    <property type="match status" value="1"/>
</dbReference>
<dbReference type="PANTHER" id="PTHR20856">
    <property type="entry name" value="DNA-DIRECTED RNA POLYMERASE I SUBUNIT 2"/>
    <property type="match status" value="1"/>
</dbReference>
<dbReference type="Pfam" id="PF04563">
    <property type="entry name" value="RNA_pol_Rpb2_1"/>
    <property type="match status" value="1"/>
</dbReference>
<dbReference type="Pfam" id="PF04561">
    <property type="entry name" value="RNA_pol_Rpb2_2"/>
    <property type="match status" value="1"/>
</dbReference>
<dbReference type="Pfam" id="PF04565">
    <property type="entry name" value="RNA_pol_Rpb2_3"/>
    <property type="match status" value="1"/>
</dbReference>
<dbReference type="Pfam" id="PF10385">
    <property type="entry name" value="RNA_pol_Rpb2_45"/>
    <property type="match status" value="1"/>
</dbReference>
<dbReference type="Pfam" id="PF00562">
    <property type="entry name" value="RNA_pol_Rpb2_6"/>
    <property type="match status" value="1"/>
</dbReference>
<dbReference type="Pfam" id="PF04560">
    <property type="entry name" value="RNA_pol_Rpb2_7"/>
    <property type="match status" value="1"/>
</dbReference>
<dbReference type="SUPFAM" id="SSF64484">
    <property type="entry name" value="beta and beta-prime subunits of DNA dependent RNA-polymerase"/>
    <property type="match status" value="1"/>
</dbReference>
<dbReference type="PROSITE" id="PS01166">
    <property type="entry name" value="RNA_POL_BETA"/>
    <property type="match status" value="1"/>
</dbReference>